<dbReference type="EC" id="3.2.1.99"/>
<dbReference type="EMBL" id="DQ490482">
    <property type="protein sequence ID" value="ABF50858.1"/>
    <property type="molecule type" value="mRNA"/>
</dbReference>
<dbReference type="EMBL" id="AACD01000051">
    <property type="protein sequence ID" value="EAA63615.1"/>
    <property type="status" value="ALT_SEQ"/>
    <property type="molecule type" value="Genomic_DNA"/>
</dbReference>
<dbReference type="EMBL" id="BN001306">
    <property type="protein sequence ID" value="CBF83510.1"/>
    <property type="status" value="ALT_SEQ"/>
    <property type="molecule type" value="Genomic_DNA"/>
</dbReference>
<dbReference type="RefSeq" id="XP_660648.1">
    <property type="nucleotide sequence ID" value="XM_655556.1"/>
</dbReference>
<dbReference type="SMR" id="Q5B8T6"/>
<dbReference type="CAZy" id="GH43">
    <property type="family name" value="Glycoside Hydrolase Family 43"/>
</dbReference>
<dbReference type="GlyCosmos" id="Q5B8T6">
    <property type="glycosylation" value="4 sites, No reported glycans"/>
</dbReference>
<dbReference type="KEGG" id="ani:ANIA_03044"/>
<dbReference type="eggNOG" id="ENOG502RADR">
    <property type="taxonomic scope" value="Eukaryota"/>
</dbReference>
<dbReference type="HOGENOM" id="CLU_009397_5_0_1"/>
<dbReference type="InParanoid" id="Q5B8T6"/>
<dbReference type="OrthoDB" id="195678at2759"/>
<dbReference type="UniPathway" id="UPA00667"/>
<dbReference type="Proteomes" id="UP000000560">
    <property type="component" value="Chromosome VI"/>
</dbReference>
<dbReference type="GO" id="GO:0005886">
    <property type="term" value="C:plasma membrane"/>
    <property type="evidence" value="ECO:0007669"/>
    <property type="project" value="UniProtKB-SubCell"/>
</dbReference>
<dbReference type="GO" id="GO:0098552">
    <property type="term" value="C:side of membrane"/>
    <property type="evidence" value="ECO:0007669"/>
    <property type="project" value="UniProtKB-KW"/>
</dbReference>
<dbReference type="GO" id="GO:0046558">
    <property type="term" value="F:arabinan endo-1,5-alpha-L-arabinosidase activity"/>
    <property type="evidence" value="ECO:0007669"/>
    <property type="project" value="UniProtKB-EC"/>
</dbReference>
<dbReference type="GO" id="GO:0031222">
    <property type="term" value="P:arabinan catabolic process"/>
    <property type="evidence" value="ECO:0007669"/>
    <property type="project" value="UniProtKB-UniPathway"/>
</dbReference>
<dbReference type="GO" id="GO:0045493">
    <property type="term" value="P:xylan catabolic process"/>
    <property type="evidence" value="ECO:0007669"/>
    <property type="project" value="UniProtKB-KW"/>
</dbReference>
<dbReference type="CDD" id="cd18831">
    <property type="entry name" value="GH43_AnAbnA-like"/>
    <property type="match status" value="1"/>
</dbReference>
<dbReference type="Gene3D" id="2.115.10.20">
    <property type="entry name" value="Glycosyl hydrolase domain, family 43"/>
    <property type="match status" value="1"/>
</dbReference>
<dbReference type="InterPro" id="IPR050727">
    <property type="entry name" value="GH43_arabinanases"/>
</dbReference>
<dbReference type="InterPro" id="IPR006710">
    <property type="entry name" value="Glyco_hydro_43"/>
</dbReference>
<dbReference type="InterPro" id="IPR016840">
    <property type="entry name" value="Glyco_hydro_43_endo_a_Ara-ase"/>
</dbReference>
<dbReference type="InterPro" id="IPR023296">
    <property type="entry name" value="Glyco_hydro_beta-prop_sf"/>
</dbReference>
<dbReference type="PANTHER" id="PTHR43301">
    <property type="entry name" value="ARABINAN ENDO-1,5-ALPHA-L-ARABINOSIDASE"/>
    <property type="match status" value="1"/>
</dbReference>
<dbReference type="PANTHER" id="PTHR43301:SF5">
    <property type="entry name" value="ARABINAN ENDO-1,5-ALPHA-L-ARABINOSIDASE D-RELATED"/>
    <property type="match status" value="1"/>
</dbReference>
<dbReference type="Pfam" id="PF04616">
    <property type="entry name" value="Glyco_hydro_43"/>
    <property type="match status" value="1"/>
</dbReference>
<dbReference type="PIRSF" id="PIRSF026534">
    <property type="entry name" value="Endo_alpha-L-arabinosidase"/>
    <property type="match status" value="1"/>
</dbReference>
<dbReference type="SUPFAM" id="SSF75005">
    <property type="entry name" value="Arabinanase/levansucrase/invertase"/>
    <property type="match status" value="1"/>
</dbReference>
<feature type="signal peptide" evidence="3">
    <location>
        <begin position="1"/>
        <end position="22"/>
    </location>
</feature>
<feature type="chain" id="PRO_0000394640" description="Probable arabinan endo-1,5-alpha-L-arabinosidase D">
    <location>
        <begin position="23"/>
        <end position="356"/>
    </location>
</feature>
<feature type="propeptide" id="PRO_0000394641" description="Removed in mature form" evidence="3">
    <location>
        <begin position="357"/>
        <end position="383"/>
    </location>
</feature>
<feature type="active site" description="Proton acceptor" evidence="2">
    <location>
        <position position="49"/>
    </location>
</feature>
<feature type="active site" description="Proton donor" evidence="2">
    <location>
        <position position="227"/>
    </location>
</feature>
<feature type="site" description="Important for catalytic activity, responsible for pKa modulation of the active site Glu and correct orientation of both the proton donor and substrate" evidence="2">
    <location>
        <position position="169"/>
    </location>
</feature>
<feature type="lipid moiety-binding region" description="GPI-anchor amidated asparagine" evidence="3">
    <location>
        <position position="356"/>
    </location>
</feature>
<feature type="glycosylation site" description="N-linked (GlcNAc...) asparagine" evidence="3">
    <location>
        <position position="75"/>
    </location>
</feature>
<feature type="glycosylation site" description="N-linked (GlcNAc...) asparagine" evidence="3">
    <location>
        <position position="163"/>
    </location>
</feature>
<feature type="glycosylation site" description="N-linked (GlcNAc...) asparagine" evidence="3">
    <location>
        <position position="206"/>
    </location>
</feature>
<feature type="glycosylation site" description="N-linked (GlcNAc...) asparagine" evidence="3">
    <location>
        <position position="325"/>
    </location>
</feature>
<name>ABND_EMENI</name>
<comment type="function">
    <text evidence="1">Endo-1,5-alpha-L-arabinanase involved in degradation of pectin. Its preferred substrate is linear 1,5-alpha-L-arabinan (By similarity).</text>
</comment>
<comment type="catalytic activity">
    <reaction>
        <text>Endohydrolysis of (1-&gt;5)-alpha-arabinofuranosidic linkages in (1-&gt;5)-arabinans.</text>
        <dbReference type="EC" id="3.2.1.99"/>
    </reaction>
</comment>
<comment type="pathway">
    <text>Glycan metabolism; L-arabinan degradation.</text>
</comment>
<comment type="subcellular location">
    <subcellularLocation>
        <location evidence="4">Cell membrane</location>
        <topology evidence="4">Lipid-anchor</topology>
        <topology evidence="4">GPI-anchor</topology>
    </subcellularLocation>
</comment>
<comment type="similarity">
    <text evidence="4">Belongs to the glycosyl hydrolase 43 family.</text>
</comment>
<comment type="sequence caution" evidence="4">
    <conflict type="erroneous gene model prediction">
        <sequence resource="EMBL-CDS" id="CBF83510"/>
    </conflict>
</comment>
<comment type="sequence caution" evidence="4">
    <conflict type="erroneous gene model prediction">
        <sequence resource="EMBL-CDS" id="EAA63615"/>
    </conflict>
</comment>
<proteinExistence type="evidence at transcript level"/>
<sequence>MVHITLPGLLLCLCLYLSVAPANPLNAHARVSDTTAFPLPNEGHVVAHDPSIVRHHEHFYLFKGGIHIPVFRASNLSGPWERLGTVLNGPSLVQKQNQRRPWAPMVTQWKNRFYCFYSISQNGKRNSAIGVASSDSVEPGGWTDHGPLINTGHGPGSGVYPFNVSNAIDPAFFADPITGQPYLQYGSYWKGIFQVPLAEDLLSVENATHPNTDHLVFLPKKKPKPNEGVFMSYRAPYYYAWFSHGQCCHFKTQGFPKEGNEYSIRVGRSTSVHGPFVDRDNKDLLNGGGSVVYGSNHGKVYAPGGLGVLPGANGEPDVLYYHYHNASIGFAQGDARLGWNYLDYVDGWPVPRAPSNPGNSLQPPSSVSLQIVAFLCLVILFTL</sequence>
<accession>Q5B8T6</accession>
<accession>C8VIS9</accession>
<accession>Q1HFU2</accession>
<evidence type="ECO:0000250" key="1"/>
<evidence type="ECO:0000250" key="2">
    <source>
        <dbReference type="UniProtKB" id="P94522"/>
    </source>
</evidence>
<evidence type="ECO:0000255" key="3"/>
<evidence type="ECO:0000305" key="4"/>
<protein>
    <recommendedName>
        <fullName>Probable arabinan endo-1,5-alpha-L-arabinosidase D</fullName>
        <ecNumber>3.2.1.99</ecNumber>
    </recommendedName>
    <alternativeName>
        <fullName>Endo-1,5-alpha-L-arabinanase D</fullName>
        <shortName>ABN D</shortName>
    </alternativeName>
</protein>
<gene>
    <name type="primary">abnD</name>
    <name type="ORF">AN3044</name>
</gene>
<reference key="1">
    <citation type="journal article" date="2006" name="Proc. Natl. Acad. Sci. U.S.A.">
        <title>Development and application of a suite of polysaccharide-degrading enzymes for analyzing plant cell walls.</title>
        <authorList>
            <person name="Bauer S."/>
            <person name="Vasu P."/>
            <person name="Persson S."/>
            <person name="Mort A.J."/>
            <person name="Somerville C.R."/>
        </authorList>
    </citation>
    <scope>NUCLEOTIDE SEQUENCE [MRNA]</scope>
    <source>
        <strain>FGSC A4 / ATCC 38163 / CBS 112.46 / NRRL 194 / M139</strain>
    </source>
</reference>
<reference key="2">
    <citation type="journal article" date="2005" name="Nature">
        <title>Sequencing of Aspergillus nidulans and comparative analysis with A. fumigatus and A. oryzae.</title>
        <authorList>
            <person name="Galagan J.E."/>
            <person name="Calvo S.E."/>
            <person name="Cuomo C."/>
            <person name="Ma L.-J."/>
            <person name="Wortman J.R."/>
            <person name="Batzoglou S."/>
            <person name="Lee S.-I."/>
            <person name="Bastuerkmen M."/>
            <person name="Spevak C.C."/>
            <person name="Clutterbuck J."/>
            <person name="Kapitonov V."/>
            <person name="Jurka J."/>
            <person name="Scazzocchio C."/>
            <person name="Farman M.L."/>
            <person name="Butler J."/>
            <person name="Purcell S."/>
            <person name="Harris S."/>
            <person name="Braus G.H."/>
            <person name="Draht O."/>
            <person name="Busch S."/>
            <person name="D'Enfert C."/>
            <person name="Bouchier C."/>
            <person name="Goldman G.H."/>
            <person name="Bell-Pedersen D."/>
            <person name="Griffiths-Jones S."/>
            <person name="Doonan J.H."/>
            <person name="Yu J."/>
            <person name="Vienken K."/>
            <person name="Pain A."/>
            <person name="Freitag M."/>
            <person name="Selker E.U."/>
            <person name="Archer D.B."/>
            <person name="Penalva M.A."/>
            <person name="Oakley B.R."/>
            <person name="Momany M."/>
            <person name="Tanaka T."/>
            <person name="Kumagai T."/>
            <person name="Asai K."/>
            <person name="Machida M."/>
            <person name="Nierman W.C."/>
            <person name="Denning D.W."/>
            <person name="Caddick M.X."/>
            <person name="Hynes M."/>
            <person name="Paoletti M."/>
            <person name="Fischer R."/>
            <person name="Miller B.L."/>
            <person name="Dyer P.S."/>
            <person name="Sachs M.S."/>
            <person name="Osmani S.A."/>
            <person name="Birren B.W."/>
        </authorList>
    </citation>
    <scope>NUCLEOTIDE SEQUENCE [LARGE SCALE GENOMIC DNA]</scope>
    <source>
        <strain>FGSC A4 / ATCC 38163 / CBS 112.46 / NRRL 194 / M139</strain>
    </source>
</reference>
<reference key="3">
    <citation type="journal article" date="2009" name="Fungal Genet. Biol.">
        <title>The 2008 update of the Aspergillus nidulans genome annotation: a community effort.</title>
        <authorList>
            <person name="Wortman J.R."/>
            <person name="Gilsenan J.M."/>
            <person name="Joardar V."/>
            <person name="Deegan J."/>
            <person name="Clutterbuck J."/>
            <person name="Andersen M.R."/>
            <person name="Archer D."/>
            <person name="Bencina M."/>
            <person name="Braus G."/>
            <person name="Coutinho P."/>
            <person name="von Dohren H."/>
            <person name="Doonan J."/>
            <person name="Driessen A.J."/>
            <person name="Durek P."/>
            <person name="Espeso E."/>
            <person name="Fekete E."/>
            <person name="Flipphi M."/>
            <person name="Estrada C.G."/>
            <person name="Geysens S."/>
            <person name="Goldman G."/>
            <person name="de Groot P.W."/>
            <person name="Hansen K."/>
            <person name="Harris S.D."/>
            <person name="Heinekamp T."/>
            <person name="Helmstaedt K."/>
            <person name="Henrissat B."/>
            <person name="Hofmann G."/>
            <person name="Homan T."/>
            <person name="Horio T."/>
            <person name="Horiuchi H."/>
            <person name="James S."/>
            <person name="Jones M."/>
            <person name="Karaffa L."/>
            <person name="Karanyi Z."/>
            <person name="Kato M."/>
            <person name="Keller N."/>
            <person name="Kelly D.E."/>
            <person name="Kiel J.A."/>
            <person name="Kim J.M."/>
            <person name="van der Klei I.J."/>
            <person name="Klis F.M."/>
            <person name="Kovalchuk A."/>
            <person name="Krasevec N."/>
            <person name="Kubicek C.P."/>
            <person name="Liu B."/>
            <person name="Maccabe A."/>
            <person name="Meyer V."/>
            <person name="Mirabito P."/>
            <person name="Miskei M."/>
            <person name="Mos M."/>
            <person name="Mullins J."/>
            <person name="Nelson D.R."/>
            <person name="Nielsen J."/>
            <person name="Oakley B.R."/>
            <person name="Osmani S.A."/>
            <person name="Pakula T."/>
            <person name="Paszewski A."/>
            <person name="Paulsen I."/>
            <person name="Pilsyk S."/>
            <person name="Pocsi I."/>
            <person name="Punt P.J."/>
            <person name="Ram A.F."/>
            <person name="Ren Q."/>
            <person name="Robellet X."/>
            <person name="Robson G."/>
            <person name="Seiboth B."/>
            <person name="van Solingen P."/>
            <person name="Specht T."/>
            <person name="Sun J."/>
            <person name="Taheri-Talesh N."/>
            <person name="Takeshita N."/>
            <person name="Ussery D."/>
            <person name="vanKuyk P.A."/>
            <person name="Visser H."/>
            <person name="van de Vondervoort P.J."/>
            <person name="de Vries R.P."/>
            <person name="Walton J."/>
            <person name="Xiang X."/>
            <person name="Xiong Y."/>
            <person name="Zeng A.P."/>
            <person name="Brandt B.W."/>
            <person name="Cornell M.J."/>
            <person name="van den Hondel C.A."/>
            <person name="Visser J."/>
            <person name="Oliver S.G."/>
            <person name="Turner G."/>
        </authorList>
    </citation>
    <scope>GENOME REANNOTATION</scope>
    <source>
        <strain>FGSC A4 / ATCC 38163 / CBS 112.46 / NRRL 194 / M139</strain>
    </source>
</reference>
<keyword id="KW-0119">Carbohydrate metabolism</keyword>
<keyword id="KW-1003">Cell membrane</keyword>
<keyword id="KW-0325">Glycoprotein</keyword>
<keyword id="KW-0326">Glycosidase</keyword>
<keyword id="KW-0336">GPI-anchor</keyword>
<keyword id="KW-0378">Hydrolase</keyword>
<keyword id="KW-0449">Lipoprotein</keyword>
<keyword id="KW-0472">Membrane</keyword>
<keyword id="KW-0624">Polysaccharide degradation</keyword>
<keyword id="KW-1185">Reference proteome</keyword>
<keyword id="KW-0732">Signal</keyword>
<keyword id="KW-0858">Xylan degradation</keyword>
<organism>
    <name type="scientific">Emericella nidulans (strain FGSC A4 / ATCC 38163 / CBS 112.46 / NRRL 194 / M139)</name>
    <name type="common">Aspergillus nidulans</name>
    <dbReference type="NCBI Taxonomy" id="227321"/>
    <lineage>
        <taxon>Eukaryota</taxon>
        <taxon>Fungi</taxon>
        <taxon>Dikarya</taxon>
        <taxon>Ascomycota</taxon>
        <taxon>Pezizomycotina</taxon>
        <taxon>Eurotiomycetes</taxon>
        <taxon>Eurotiomycetidae</taxon>
        <taxon>Eurotiales</taxon>
        <taxon>Aspergillaceae</taxon>
        <taxon>Aspergillus</taxon>
        <taxon>Aspergillus subgen. Nidulantes</taxon>
    </lineage>
</organism>